<sequence length="191" mass="21121">MRKIILASGSPRRKELLELASVPFEIVVSEVEETIGAYSSPSDIVMSLALQKASAVAENNSDHIVLGADTIVTYESRILGKPSNEDEAKEMLQLLSGKTHEVYTGVAIIAKEKTVTFYERTEVTFWELTEEEIDTYVASKEPFDKAGSYGIQGKGSIFVQNIQGDYYSVVGLPIARLVRELKQFDIDVTHA</sequence>
<gene>
    <name type="primary">maf</name>
    <name type="ordered locus">BC_4462</name>
</gene>
<feature type="chain" id="PRO_0000122972" description="dTTP/UTP pyrophosphatase">
    <location>
        <begin position="1"/>
        <end position="191"/>
    </location>
</feature>
<feature type="active site" description="Proton acceptor" evidence="1">
    <location>
        <position position="69"/>
    </location>
</feature>
<feature type="site" description="Important for substrate specificity" evidence="1">
    <location>
        <position position="12"/>
    </location>
</feature>
<feature type="site" description="Important for substrate specificity" evidence="1">
    <location>
        <position position="70"/>
    </location>
</feature>
<feature type="site" description="Important for substrate specificity" evidence="1">
    <location>
        <position position="152"/>
    </location>
</feature>
<organism>
    <name type="scientific">Bacillus cereus (strain ATCC 14579 / DSM 31 / CCUG 7414 / JCM 2152 / NBRC 15305 / NCIMB 9373 / NCTC 2599 / NRRL B-3711)</name>
    <dbReference type="NCBI Taxonomy" id="226900"/>
    <lineage>
        <taxon>Bacteria</taxon>
        <taxon>Bacillati</taxon>
        <taxon>Bacillota</taxon>
        <taxon>Bacilli</taxon>
        <taxon>Bacillales</taxon>
        <taxon>Bacillaceae</taxon>
        <taxon>Bacillus</taxon>
        <taxon>Bacillus cereus group</taxon>
    </lineage>
</organism>
<dbReference type="EC" id="3.6.1.9" evidence="1"/>
<dbReference type="EMBL" id="AE016877">
    <property type="protein sequence ID" value="AAP11375.1"/>
    <property type="molecule type" value="Genomic_DNA"/>
</dbReference>
<dbReference type="RefSeq" id="NP_834174.1">
    <property type="nucleotide sequence ID" value="NC_004722.1"/>
</dbReference>
<dbReference type="RefSeq" id="WP_001226290.1">
    <property type="nucleotide sequence ID" value="NZ_CP138336.1"/>
</dbReference>
<dbReference type="SMR" id="Q817R9"/>
<dbReference type="STRING" id="226900.BC_4462"/>
<dbReference type="KEGG" id="bce:BC4462"/>
<dbReference type="PATRIC" id="fig|226900.8.peg.4615"/>
<dbReference type="HOGENOM" id="CLU_040416_0_0_9"/>
<dbReference type="OrthoDB" id="9807767at2"/>
<dbReference type="Proteomes" id="UP000001417">
    <property type="component" value="Chromosome"/>
</dbReference>
<dbReference type="GO" id="GO:0005737">
    <property type="term" value="C:cytoplasm"/>
    <property type="evidence" value="ECO:0007669"/>
    <property type="project" value="UniProtKB-SubCell"/>
</dbReference>
<dbReference type="GO" id="GO:0036218">
    <property type="term" value="F:dTTP diphosphatase activity"/>
    <property type="evidence" value="ECO:0007669"/>
    <property type="project" value="RHEA"/>
</dbReference>
<dbReference type="GO" id="GO:0047429">
    <property type="term" value="F:nucleoside triphosphate diphosphatase activity"/>
    <property type="evidence" value="ECO:0000318"/>
    <property type="project" value="GO_Central"/>
</dbReference>
<dbReference type="GO" id="GO:0036221">
    <property type="term" value="F:UTP diphosphatase activity"/>
    <property type="evidence" value="ECO:0007669"/>
    <property type="project" value="RHEA"/>
</dbReference>
<dbReference type="GO" id="GO:0009117">
    <property type="term" value="P:nucleotide metabolic process"/>
    <property type="evidence" value="ECO:0007669"/>
    <property type="project" value="UniProtKB-KW"/>
</dbReference>
<dbReference type="CDD" id="cd00555">
    <property type="entry name" value="Maf"/>
    <property type="match status" value="1"/>
</dbReference>
<dbReference type="FunFam" id="3.90.950.10:FF:000007">
    <property type="entry name" value="dTTP/UTP pyrophosphatase"/>
    <property type="match status" value="1"/>
</dbReference>
<dbReference type="Gene3D" id="3.90.950.10">
    <property type="match status" value="1"/>
</dbReference>
<dbReference type="HAMAP" id="MF_00528">
    <property type="entry name" value="Maf"/>
    <property type="match status" value="1"/>
</dbReference>
<dbReference type="InterPro" id="IPR029001">
    <property type="entry name" value="ITPase-like_fam"/>
</dbReference>
<dbReference type="InterPro" id="IPR003697">
    <property type="entry name" value="Maf-like"/>
</dbReference>
<dbReference type="NCBIfam" id="TIGR00172">
    <property type="entry name" value="maf"/>
    <property type="match status" value="1"/>
</dbReference>
<dbReference type="PANTHER" id="PTHR43213">
    <property type="entry name" value="BIFUNCTIONAL DTTP/UTP PYROPHOSPHATASE/METHYLTRANSFERASE PROTEIN-RELATED"/>
    <property type="match status" value="1"/>
</dbReference>
<dbReference type="PANTHER" id="PTHR43213:SF5">
    <property type="entry name" value="BIFUNCTIONAL DTTP_UTP PYROPHOSPHATASE_METHYLTRANSFERASE PROTEIN-RELATED"/>
    <property type="match status" value="1"/>
</dbReference>
<dbReference type="Pfam" id="PF02545">
    <property type="entry name" value="Maf"/>
    <property type="match status" value="1"/>
</dbReference>
<dbReference type="PIRSF" id="PIRSF006305">
    <property type="entry name" value="Maf"/>
    <property type="match status" value="1"/>
</dbReference>
<dbReference type="SUPFAM" id="SSF52972">
    <property type="entry name" value="ITPase-like"/>
    <property type="match status" value="1"/>
</dbReference>
<protein>
    <recommendedName>
        <fullName evidence="1">dTTP/UTP pyrophosphatase</fullName>
        <shortName evidence="1">dTTPase/UTPase</shortName>
        <ecNumber evidence="1">3.6.1.9</ecNumber>
    </recommendedName>
    <alternativeName>
        <fullName evidence="1">Nucleoside triphosphate pyrophosphatase</fullName>
    </alternativeName>
    <alternativeName>
        <fullName evidence="1">Nucleotide pyrophosphatase</fullName>
        <shortName evidence="1">Nucleotide PPase</shortName>
    </alternativeName>
</protein>
<keyword id="KW-0963">Cytoplasm</keyword>
<keyword id="KW-0378">Hydrolase</keyword>
<keyword id="KW-0546">Nucleotide metabolism</keyword>
<keyword id="KW-1185">Reference proteome</keyword>
<reference key="1">
    <citation type="journal article" date="2003" name="Nature">
        <title>Genome sequence of Bacillus cereus and comparative analysis with Bacillus anthracis.</title>
        <authorList>
            <person name="Ivanova N."/>
            <person name="Sorokin A."/>
            <person name="Anderson I."/>
            <person name="Galleron N."/>
            <person name="Candelon B."/>
            <person name="Kapatral V."/>
            <person name="Bhattacharyya A."/>
            <person name="Reznik G."/>
            <person name="Mikhailova N."/>
            <person name="Lapidus A."/>
            <person name="Chu L."/>
            <person name="Mazur M."/>
            <person name="Goltsman E."/>
            <person name="Larsen N."/>
            <person name="D'Souza M."/>
            <person name="Walunas T."/>
            <person name="Grechkin Y."/>
            <person name="Pusch G."/>
            <person name="Haselkorn R."/>
            <person name="Fonstein M."/>
            <person name="Ehrlich S.D."/>
            <person name="Overbeek R."/>
            <person name="Kyrpides N.C."/>
        </authorList>
    </citation>
    <scope>NUCLEOTIDE SEQUENCE [LARGE SCALE GENOMIC DNA]</scope>
    <source>
        <strain>ATCC 14579 / DSM 31 / CCUG 7414 / JCM 2152 / NBRC 15305 / NCIMB 9373 / NCTC 2599 / NRRL B-3711</strain>
    </source>
</reference>
<comment type="function">
    <text evidence="1">Nucleoside triphosphate pyrophosphatase that hydrolyzes dTTP and UTP. May have a dual role in cell division arrest and in preventing the incorporation of modified nucleotides into cellular nucleic acids.</text>
</comment>
<comment type="catalytic activity">
    <reaction evidence="1">
        <text>dTTP + H2O = dTMP + diphosphate + H(+)</text>
        <dbReference type="Rhea" id="RHEA:28534"/>
        <dbReference type="ChEBI" id="CHEBI:15377"/>
        <dbReference type="ChEBI" id="CHEBI:15378"/>
        <dbReference type="ChEBI" id="CHEBI:33019"/>
        <dbReference type="ChEBI" id="CHEBI:37568"/>
        <dbReference type="ChEBI" id="CHEBI:63528"/>
        <dbReference type="EC" id="3.6.1.9"/>
    </reaction>
</comment>
<comment type="catalytic activity">
    <reaction evidence="1">
        <text>UTP + H2O = UMP + diphosphate + H(+)</text>
        <dbReference type="Rhea" id="RHEA:29395"/>
        <dbReference type="ChEBI" id="CHEBI:15377"/>
        <dbReference type="ChEBI" id="CHEBI:15378"/>
        <dbReference type="ChEBI" id="CHEBI:33019"/>
        <dbReference type="ChEBI" id="CHEBI:46398"/>
        <dbReference type="ChEBI" id="CHEBI:57865"/>
        <dbReference type="EC" id="3.6.1.9"/>
    </reaction>
</comment>
<comment type="cofactor">
    <cofactor evidence="1">
        <name>a divalent metal cation</name>
        <dbReference type="ChEBI" id="CHEBI:60240"/>
    </cofactor>
</comment>
<comment type="subcellular location">
    <subcellularLocation>
        <location evidence="1">Cytoplasm</location>
    </subcellularLocation>
</comment>
<comment type="similarity">
    <text evidence="1">Belongs to the Maf family. YhdE subfamily.</text>
</comment>
<name>NTPPA_BACCR</name>
<accession>Q817R9</accession>
<evidence type="ECO:0000255" key="1">
    <source>
        <dbReference type="HAMAP-Rule" id="MF_00528"/>
    </source>
</evidence>
<proteinExistence type="inferred from homology"/>